<name>PCP_YERPY</name>
<accession>B1JRB0</accession>
<feature type="chain" id="PRO_1000124011" description="Pyrrolidone-carboxylate peptidase">
    <location>
        <begin position="1"/>
        <end position="215"/>
    </location>
</feature>
<feature type="active site" evidence="1">
    <location>
        <position position="80"/>
    </location>
</feature>
<feature type="active site" evidence="1">
    <location>
        <position position="143"/>
    </location>
</feature>
<feature type="active site" evidence="1">
    <location>
        <position position="167"/>
    </location>
</feature>
<comment type="function">
    <text evidence="1">Removes 5-oxoproline from various penultimate amino acid residues except L-proline.</text>
</comment>
<comment type="catalytic activity">
    <reaction evidence="1">
        <text>Release of an N-terminal pyroglutamyl group from a polypeptide, the second amino acid generally not being Pro.</text>
        <dbReference type="EC" id="3.4.19.3"/>
    </reaction>
</comment>
<comment type="subunit">
    <text evidence="1">Homotetramer.</text>
</comment>
<comment type="subcellular location">
    <subcellularLocation>
        <location evidence="1">Cytoplasm</location>
    </subcellularLocation>
</comment>
<comment type="similarity">
    <text evidence="1">Belongs to the peptidase C15 family.</text>
</comment>
<dbReference type="EC" id="3.4.19.3" evidence="1"/>
<dbReference type="EMBL" id="CP000950">
    <property type="protein sequence ID" value="ACA67470.1"/>
    <property type="molecule type" value="Genomic_DNA"/>
</dbReference>
<dbReference type="RefSeq" id="WP_012303779.1">
    <property type="nucleotide sequence ID" value="NZ_CP009792.1"/>
</dbReference>
<dbReference type="SMR" id="B1JRB0"/>
<dbReference type="MEROPS" id="C15.001"/>
<dbReference type="KEGG" id="ypy:YPK_1172"/>
<dbReference type="PATRIC" id="fig|502800.11.peg.1808"/>
<dbReference type="GO" id="GO:0005829">
    <property type="term" value="C:cytosol"/>
    <property type="evidence" value="ECO:0007669"/>
    <property type="project" value="InterPro"/>
</dbReference>
<dbReference type="GO" id="GO:0016920">
    <property type="term" value="F:pyroglutamyl-peptidase activity"/>
    <property type="evidence" value="ECO:0007669"/>
    <property type="project" value="UniProtKB-UniRule"/>
</dbReference>
<dbReference type="GO" id="GO:0006508">
    <property type="term" value="P:proteolysis"/>
    <property type="evidence" value="ECO:0007669"/>
    <property type="project" value="UniProtKB-KW"/>
</dbReference>
<dbReference type="CDD" id="cd00501">
    <property type="entry name" value="Peptidase_C15"/>
    <property type="match status" value="1"/>
</dbReference>
<dbReference type="FunFam" id="3.40.630.20:FF:000001">
    <property type="entry name" value="Pyrrolidone-carboxylate peptidase"/>
    <property type="match status" value="1"/>
</dbReference>
<dbReference type="Gene3D" id="3.40.630.20">
    <property type="entry name" value="Peptidase C15, pyroglutamyl peptidase I-like"/>
    <property type="match status" value="1"/>
</dbReference>
<dbReference type="HAMAP" id="MF_00417">
    <property type="entry name" value="Pyrrolid_peptidase"/>
    <property type="match status" value="1"/>
</dbReference>
<dbReference type="InterPro" id="IPR000816">
    <property type="entry name" value="Peptidase_C15"/>
</dbReference>
<dbReference type="InterPro" id="IPR016125">
    <property type="entry name" value="Peptidase_C15-like"/>
</dbReference>
<dbReference type="InterPro" id="IPR036440">
    <property type="entry name" value="Peptidase_C15-like_sf"/>
</dbReference>
<dbReference type="InterPro" id="IPR029762">
    <property type="entry name" value="PGP-I_bact-type"/>
</dbReference>
<dbReference type="InterPro" id="IPR033694">
    <property type="entry name" value="PGPEP1_Cys_AS"/>
</dbReference>
<dbReference type="InterPro" id="IPR033693">
    <property type="entry name" value="PGPEP1_Glu_AS"/>
</dbReference>
<dbReference type="NCBIfam" id="NF009676">
    <property type="entry name" value="PRK13197.1"/>
    <property type="match status" value="1"/>
</dbReference>
<dbReference type="NCBIfam" id="TIGR00504">
    <property type="entry name" value="pyro_pdase"/>
    <property type="match status" value="1"/>
</dbReference>
<dbReference type="PANTHER" id="PTHR23402">
    <property type="entry name" value="PROTEASE FAMILY C15 PYROGLUTAMYL-PEPTIDASE I-RELATED"/>
    <property type="match status" value="1"/>
</dbReference>
<dbReference type="PANTHER" id="PTHR23402:SF1">
    <property type="entry name" value="PYROGLUTAMYL-PEPTIDASE I"/>
    <property type="match status" value="1"/>
</dbReference>
<dbReference type="Pfam" id="PF01470">
    <property type="entry name" value="Peptidase_C15"/>
    <property type="match status" value="1"/>
</dbReference>
<dbReference type="PIRSF" id="PIRSF015592">
    <property type="entry name" value="Prld-crbxl_pptds"/>
    <property type="match status" value="1"/>
</dbReference>
<dbReference type="PRINTS" id="PR00706">
    <property type="entry name" value="PYROGLUPTASE"/>
</dbReference>
<dbReference type="SUPFAM" id="SSF53182">
    <property type="entry name" value="Pyrrolidone carboxyl peptidase (pyroglutamate aminopeptidase)"/>
    <property type="match status" value="1"/>
</dbReference>
<dbReference type="PROSITE" id="PS01334">
    <property type="entry name" value="PYRASE_CYS"/>
    <property type="match status" value="1"/>
</dbReference>
<dbReference type="PROSITE" id="PS01333">
    <property type="entry name" value="PYRASE_GLU"/>
    <property type="match status" value="1"/>
</dbReference>
<keyword id="KW-0963">Cytoplasm</keyword>
<keyword id="KW-0378">Hydrolase</keyword>
<keyword id="KW-0645">Protease</keyword>
<keyword id="KW-0788">Thiol protease</keyword>
<reference key="1">
    <citation type="submission" date="2008-02" db="EMBL/GenBank/DDBJ databases">
        <title>Complete sequence of Yersinia pseudotuberculosis YPIII.</title>
        <authorList>
            <consortium name="US DOE Joint Genome Institute"/>
            <person name="Copeland A."/>
            <person name="Lucas S."/>
            <person name="Lapidus A."/>
            <person name="Glavina del Rio T."/>
            <person name="Dalin E."/>
            <person name="Tice H."/>
            <person name="Bruce D."/>
            <person name="Goodwin L."/>
            <person name="Pitluck S."/>
            <person name="Munk A.C."/>
            <person name="Brettin T."/>
            <person name="Detter J.C."/>
            <person name="Han C."/>
            <person name="Tapia R."/>
            <person name="Schmutz J."/>
            <person name="Larimer F."/>
            <person name="Land M."/>
            <person name="Hauser L."/>
            <person name="Challacombe J.F."/>
            <person name="Green L."/>
            <person name="Lindler L.E."/>
            <person name="Nikolich M.P."/>
            <person name="Richardson P."/>
        </authorList>
    </citation>
    <scope>NUCLEOTIDE SEQUENCE [LARGE SCALE GENOMIC DNA]</scope>
    <source>
        <strain>YPIII</strain>
    </source>
</reference>
<organism>
    <name type="scientific">Yersinia pseudotuberculosis serotype O:3 (strain YPIII)</name>
    <dbReference type="NCBI Taxonomy" id="502800"/>
    <lineage>
        <taxon>Bacteria</taxon>
        <taxon>Pseudomonadati</taxon>
        <taxon>Pseudomonadota</taxon>
        <taxon>Gammaproteobacteria</taxon>
        <taxon>Enterobacterales</taxon>
        <taxon>Yersiniaceae</taxon>
        <taxon>Yersinia</taxon>
    </lineage>
</organism>
<protein>
    <recommendedName>
        <fullName evidence="1">Pyrrolidone-carboxylate peptidase</fullName>
        <ecNumber evidence="1">3.4.19.3</ecNumber>
    </recommendedName>
    <alternativeName>
        <fullName evidence="1">5-oxoprolyl-peptidase</fullName>
    </alternativeName>
    <alternativeName>
        <fullName evidence="1">Pyroglutamyl-peptidase I</fullName>
        <shortName evidence="1">PGP-I</shortName>
        <shortName evidence="1">Pyrase</shortName>
    </alternativeName>
</protein>
<gene>
    <name evidence="1" type="primary">pcp</name>
    <name type="ordered locus">YPK_1172</name>
</gene>
<evidence type="ECO:0000255" key="1">
    <source>
        <dbReference type="HAMAP-Rule" id="MF_00417"/>
    </source>
</evidence>
<sequence>MRRVLITGFEPFGGERINPSWEVVKQMNDLMMGGVRIVARQLPCAFGEALTALNTAIDDVQPVLVLAIGQAGGRADITIERVAINVDDARIPDNLGNQPVDQPIIQEGPAAYFTRLPIKAMVQGIREAGIPASVSQTAGTYVCNHVMYGLLHRLNQFNNEVKGGFIHIPYLPEQAVDHPGAPSMSAHSVLVALELAISIALQIEHDLHITGGAVH</sequence>
<proteinExistence type="inferred from homology"/>